<accession>B1PZN6</accession>
<dbReference type="EMBL" id="EU516350">
    <property type="protein sequence ID" value="ACB05658.1"/>
    <property type="molecule type" value="mRNA"/>
</dbReference>
<dbReference type="ConoServer" id="2823">
    <property type="toxin name" value="Ca8b precursor"/>
</dbReference>
<dbReference type="GO" id="GO:0005576">
    <property type="term" value="C:extracellular region"/>
    <property type="evidence" value="ECO:0007669"/>
    <property type="project" value="UniProtKB-SubCell"/>
</dbReference>
<dbReference type="GO" id="GO:0090729">
    <property type="term" value="F:toxin activity"/>
    <property type="evidence" value="ECO:0007669"/>
    <property type="project" value="UniProtKB-KW"/>
</dbReference>
<evidence type="ECO:0000250" key="1"/>
<evidence type="ECO:0000255" key="2"/>
<evidence type="ECO:0000303" key="3">
    <source>
    </source>
</evidence>
<evidence type="ECO:0000303" key="4">
    <source>
    </source>
</evidence>
<evidence type="ECO:0000305" key="5"/>
<name>CS82_CONCB</name>
<comment type="subcellular location">
    <subcellularLocation>
        <location evidence="1">Secreted</location>
    </subcellularLocation>
</comment>
<comment type="tissue specificity">
    <text>Expressed by the venom duct.</text>
</comment>
<comment type="domain">
    <text>The cysteine framework is VIII (C-C-C-C-C-C-C-C-C-C).</text>
</comment>
<comment type="PTM">
    <text evidence="5">Contains 5 disulfide bonds.</text>
</comment>
<comment type="similarity">
    <text evidence="5">Belongs to the conotoxin S superfamily.</text>
</comment>
<reference key="1">
    <citation type="journal article" date="2008" name="Toxicon">
        <title>Identification of a novel S-superfamily conotoxin from vermivorous Conus caracteristicus.</title>
        <authorList>
            <person name="Liu L."/>
            <person name="Wu X."/>
            <person name="Yuan D."/>
            <person name="Chi C."/>
            <person name="Wang C."/>
        </authorList>
    </citation>
    <scope>NUCLEOTIDE SEQUENCE [MRNA]</scope>
    <source>
        <tissue>Venom duct</tissue>
    </source>
</reference>
<reference key="2">
    <citation type="journal article" date="2019" name="Mar. Drugs">
        <title>High-throughput identification and analysis of novel conotoxins from three vermivorous cone snails by transcriptome sequencing.</title>
        <authorList>
            <person name="Yao G."/>
            <person name="Peng C."/>
            <person name="Zhu Y."/>
            <person name="Fan C."/>
            <person name="Jiang H."/>
            <person name="Chen J."/>
            <person name="Cao Y."/>
            <person name="Shi Q."/>
        </authorList>
    </citation>
    <scope>NUCLEOTIDE SEQUENCE [MRNA]</scope>
    <source>
        <tissue>Venom duct</tissue>
    </source>
</reference>
<organism>
    <name type="scientific">Conus caracteristicus</name>
    <name type="common">Characteristic cone</name>
    <dbReference type="NCBI Taxonomy" id="89440"/>
    <lineage>
        <taxon>Eukaryota</taxon>
        <taxon>Metazoa</taxon>
        <taxon>Spiralia</taxon>
        <taxon>Lophotrochozoa</taxon>
        <taxon>Mollusca</taxon>
        <taxon>Gastropoda</taxon>
        <taxon>Caenogastropoda</taxon>
        <taxon>Neogastropoda</taxon>
        <taxon>Conoidea</taxon>
        <taxon>Conidae</taxon>
        <taxon>Conus</taxon>
    </lineage>
</organism>
<keyword id="KW-0027">Amidation</keyword>
<keyword id="KW-1015">Disulfide bond</keyword>
<keyword id="KW-0528">Neurotoxin</keyword>
<keyword id="KW-0964">Secreted</keyword>
<keyword id="KW-0732">Signal</keyword>
<keyword id="KW-0800">Toxin</keyword>
<sequence>MMLKMGAMFVLLLLFILPSSQQEGDVQARKTHLKRGFYGTLAMSTRGCSGTCHRREDGKCRGTCDCSGYSYCRCGDAHHFYRGCTCSCQG</sequence>
<protein>
    <recommendedName>
        <fullName evidence="3">Conotoxin Ca8.2</fullName>
    </recommendedName>
    <alternativeName>
        <fullName evidence="4">Ca-84</fullName>
    </alternativeName>
</protein>
<feature type="signal peptide" evidence="2">
    <location>
        <begin position="1"/>
        <end position="21"/>
    </location>
</feature>
<feature type="propeptide" id="PRO_0000346135" evidence="1">
    <location>
        <begin position="22"/>
        <end position="46"/>
    </location>
</feature>
<feature type="peptide" id="PRO_0000346136" description="Conotoxin Ca8.2">
    <location>
        <begin position="47"/>
        <end position="89"/>
    </location>
</feature>
<feature type="modified residue" description="Glutamine amide" evidence="1">
    <location>
        <position position="89"/>
    </location>
</feature>
<proteinExistence type="evidence at transcript level"/>